<organism>
    <name type="scientific">Arabidopsis thaliana</name>
    <name type="common">Mouse-ear cress</name>
    <dbReference type="NCBI Taxonomy" id="3702"/>
    <lineage>
        <taxon>Eukaryota</taxon>
        <taxon>Viridiplantae</taxon>
        <taxon>Streptophyta</taxon>
        <taxon>Embryophyta</taxon>
        <taxon>Tracheophyta</taxon>
        <taxon>Spermatophyta</taxon>
        <taxon>Magnoliopsida</taxon>
        <taxon>eudicotyledons</taxon>
        <taxon>Gunneridae</taxon>
        <taxon>Pentapetalae</taxon>
        <taxon>rosids</taxon>
        <taxon>malvids</taxon>
        <taxon>Brassicales</taxon>
        <taxon>Brassicaceae</taxon>
        <taxon>Camelineae</taxon>
        <taxon>Arabidopsis</taxon>
    </lineage>
</organism>
<accession>Q84WV0</accession>
<accession>Q8LFB5</accession>
<accession>Q9C8X6</accession>
<reference key="1">
    <citation type="journal article" date="2000" name="Nature">
        <title>Sequence and analysis of chromosome 1 of the plant Arabidopsis thaliana.</title>
        <authorList>
            <person name="Theologis A."/>
            <person name="Ecker J.R."/>
            <person name="Palm C.J."/>
            <person name="Federspiel N.A."/>
            <person name="Kaul S."/>
            <person name="White O."/>
            <person name="Alonso J."/>
            <person name="Altafi H."/>
            <person name="Araujo R."/>
            <person name="Bowman C.L."/>
            <person name="Brooks S.Y."/>
            <person name="Buehler E."/>
            <person name="Chan A."/>
            <person name="Chao Q."/>
            <person name="Chen H."/>
            <person name="Cheuk R.F."/>
            <person name="Chin C.W."/>
            <person name="Chung M.K."/>
            <person name="Conn L."/>
            <person name="Conway A.B."/>
            <person name="Conway A.R."/>
            <person name="Creasy T.H."/>
            <person name="Dewar K."/>
            <person name="Dunn P."/>
            <person name="Etgu P."/>
            <person name="Feldblyum T.V."/>
            <person name="Feng J.-D."/>
            <person name="Fong B."/>
            <person name="Fujii C.Y."/>
            <person name="Gill J.E."/>
            <person name="Goldsmith A.D."/>
            <person name="Haas B."/>
            <person name="Hansen N.F."/>
            <person name="Hughes B."/>
            <person name="Huizar L."/>
            <person name="Hunter J.L."/>
            <person name="Jenkins J."/>
            <person name="Johnson-Hopson C."/>
            <person name="Khan S."/>
            <person name="Khaykin E."/>
            <person name="Kim C.J."/>
            <person name="Koo H.L."/>
            <person name="Kremenetskaia I."/>
            <person name="Kurtz D.B."/>
            <person name="Kwan A."/>
            <person name="Lam B."/>
            <person name="Langin-Hooper S."/>
            <person name="Lee A."/>
            <person name="Lee J.M."/>
            <person name="Lenz C.A."/>
            <person name="Li J.H."/>
            <person name="Li Y.-P."/>
            <person name="Lin X."/>
            <person name="Liu S.X."/>
            <person name="Liu Z.A."/>
            <person name="Luros J.S."/>
            <person name="Maiti R."/>
            <person name="Marziali A."/>
            <person name="Militscher J."/>
            <person name="Miranda M."/>
            <person name="Nguyen M."/>
            <person name="Nierman W.C."/>
            <person name="Osborne B.I."/>
            <person name="Pai G."/>
            <person name="Peterson J."/>
            <person name="Pham P.K."/>
            <person name="Rizzo M."/>
            <person name="Rooney T."/>
            <person name="Rowley D."/>
            <person name="Sakano H."/>
            <person name="Salzberg S.L."/>
            <person name="Schwartz J.R."/>
            <person name="Shinn P."/>
            <person name="Southwick A.M."/>
            <person name="Sun H."/>
            <person name="Tallon L.J."/>
            <person name="Tambunga G."/>
            <person name="Toriumi M.J."/>
            <person name="Town C.D."/>
            <person name="Utterback T."/>
            <person name="Van Aken S."/>
            <person name="Vaysberg M."/>
            <person name="Vysotskaia V.S."/>
            <person name="Walker M."/>
            <person name="Wu D."/>
            <person name="Yu G."/>
            <person name="Fraser C.M."/>
            <person name="Venter J.C."/>
            <person name="Davis R.W."/>
        </authorList>
    </citation>
    <scope>NUCLEOTIDE SEQUENCE [LARGE SCALE GENOMIC DNA]</scope>
    <source>
        <strain>cv. Columbia</strain>
    </source>
</reference>
<reference key="2">
    <citation type="journal article" date="2017" name="Plant J.">
        <title>Araport11: a complete reannotation of the Arabidopsis thaliana reference genome.</title>
        <authorList>
            <person name="Cheng C.Y."/>
            <person name="Krishnakumar V."/>
            <person name="Chan A.P."/>
            <person name="Thibaud-Nissen F."/>
            <person name="Schobel S."/>
            <person name="Town C.D."/>
        </authorList>
    </citation>
    <scope>GENOME REANNOTATION</scope>
    <source>
        <strain>cv. Columbia</strain>
    </source>
</reference>
<reference key="3">
    <citation type="journal article" date="2003" name="Science">
        <title>Empirical analysis of transcriptional activity in the Arabidopsis genome.</title>
        <authorList>
            <person name="Yamada K."/>
            <person name="Lim J."/>
            <person name="Dale J.M."/>
            <person name="Chen H."/>
            <person name="Shinn P."/>
            <person name="Palm C.J."/>
            <person name="Southwick A.M."/>
            <person name="Wu H.C."/>
            <person name="Kim C.J."/>
            <person name="Nguyen M."/>
            <person name="Pham P.K."/>
            <person name="Cheuk R.F."/>
            <person name="Karlin-Newmann G."/>
            <person name="Liu S.X."/>
            <person name="Lam B."/>
            <person name="Sakano H."/>
            <person name="Wu T."/>
            <person name="Yu G."/>
            <person name="Miranda M."/>
            <person name="Quach H.L."/>
            <person name="Tripp M."/>
            <person name="Chang C.H."/>
            <person name="Lee J.M."/>
            <person name="Toriumi M.J."/>
            <person name="Chan M.M."/>
            <person name="Tang C.C."/>
            <person name="Onodera C.S."/>
            <person name="Deng J.M."/>
            <person name="Akiyama K."/>
            <person name="Ansari Y."/>
            <person name="Arakawa T."/>
            <person name="Banh J."/>
            <person name="Banno F."/>
            <person name="Bowser L."/>
            <person name="Brooks S.Y."/>
            <person name="Carninci P."/>
            <person name="Chao Q."/>
            <person name="Choy N."/>
            <person name="Enju A."/>
            <person name="Goldsmith A.D."/>
            <person name="Gurjal M."/>
            <person name="Hansen N.F."/>
            <person name="Hayashizaki Y."/>
            <person name="Johnson-Hopson C."/>
            <person name="Hsuan V.W."/>
            <person name="Iida K."/>
            <person name="Karnes M."/>
            <person name="Khan S."/>
            <person name="Koesema E."/>
            <person name="Ishida J."/>
            <person name="Jiang P.X."/>
            <person name="Jones T."/>
            <person name="Kawai J."/>
            <person name="Kamiya A."/>
            <person name="Meyers C."/>
            <person name="Nakajima M."/>
            <person name="Narusaka M."/>
            <person name="Seki M."/>
            <person name="Sakurai T."/>
            <person name="Satou M."/>
            <person name="Tamse R."/>
            <person name="Vaysberg M."/>
            <person name="Wallender E.K."/>
            <person name="Wong C."/>
            <person name="Yamamura Y."/>
            <person name="Yuan S."/>
            <person name="Shinozaki K."/>
            <person name="Davis R.W."/>
            <person name="Theologis A."/>
            <person name="Ecker J.R."/>
        </authorList>
    </citation>
    <scope>NUCLEOTIDE SEQUENCE [LARGE SCALE MRNA]</scope>
    <source>
        <strain>cv. Columbia</strain>
    </source>
</reference>
<reference key="4">
    <citation type="submission" date="2002-03" db="EMBL/GenBank/DDBJ databases">
        <title>Full-length cDNA from Arabidopsis thaliana.</title>
        <authorList>
            <person name="Brover V.V."/>
            <person name="Troukhan M.E."/>
            <person name="Alexandrov N.A."/>
            <person name="Lu Y.-P."/>
            <person name="Flavell R.B."/>
            <person name="Feldmann K.A."/>
        </authorList>
    </citation>
    <scope>NUCLEOTIDE SEQUENCE [LARGE SCALE MRNA]</scope>
</reference>
<reference key="5">
    <citation type="journal article" date="2003" name="J. Exp. Bot.">
        <title>Genetic manipulation of glycine decarboxylation.</title>
        <authorList>
            <person name="Bauwe H."/>
            <person name="Kolukisaoglu U."/>
        </authorList>
    </citation>
    <scope>REVIEW</scope>
</reference>
<reference key="6">
    <citation type="journal article" date="2010" name="Biochem. J.">
        <title>One-carbon metabolism in plants: characterization of a plastid serine hydroxymethyltransferase.</title>
        <authorList>
            <person name="Zhang Y."/>
            <person name="Sun K."/>
            <person name="Sandoval F.J."/>
            <person name="Santiago K."/>
            <person name="Roje S."/>
        </authorList>
    </citation>
    <scope>GENE FAMILY</scope>
</reference>
<proteinExistence type="evidence at protein level"/>
<comment type="function">
    <text evidence="1">Catalyzes the interconversion of serine and glycine.</text>
</comment>
<comment type="catalytic activity">
    <reaction>
        <text>(6R)-5,10-methylene-5,6,7,8-tetrahydrofolate + glycine + H2O = (6S)-5,6,7,8-tetrahydrofolate + L-serine</text>
        <dbReference type="Rhea" id="RHEA:15481"/>
        <dbReference type="ChEBI" id="CHEBI:15377"/>
        <dbReference type="ChEBI" id="CHEBI:15636"/>
        <dbReference type="ChEBI" id="CHEBI:33384"/>
        <dbReference type="ChEBI" id="CHEBI:57305"/>
        <dbReference type="ChEBI" id="CHEBI:57453"/>
        <dbReference type="EC" id="2.1.2.1"/>
    </reaction>
</comment>
<comment type="cofactor">
    <cofactor evidence="1">
        <name>pyridoxal 5'-phosphate</name>
        <dbReference type="ChEBI" id="CHEBI:597326"/>
    </cofactor>
</comment>
<comment type="pathway">
    <text>One-carbon metabolism; tetrahydrofolate interconversion.</text>
</comment>
<comment type="subunit">
    <text evidence="1">Homotetramer.</text>
</comment>
<comment type="subcellular location">
    <subcellularLocation>
        <location evidence="3">Cytoplasm</location>
    </subcellularLocation>
</comment>
<comment type="similarity">
    <text evidence="3">Belongs to the SHMT family.</text>
</comment>
<comment type="sequence caution" evidence="3">
    <conflict type="erroneous initiation">
        <sequence resource="EMBL-CDS" id="AAG52195"/>
    </conflict>
    <text>Truncated N-terminus.</text>
</comment>
<comment type="sequence caution" evidence="3">
    <conflict type="erroneous initiation">
        <sequence resource="EMBL-CDS" id="AAM61506"/>
    </conflict>
    <text>Truncated N-terminus.</text>
</comment>
<dbReference type="EC" id="2.1.2.1"/>
<dbReference type="EMBL" id="AC021199">
    <property type="protein sequence ID" value="AAG52195.1"/>
    <property type="status" value="ALT_INIT"/>
    <property type="molecule type" value="Genomic_DNA"/>
</dbReference>
<dbReference type="EMBL" id="CP002684">
    <property type="protein sequence ID" value="AEE31862.1"/>
    <property type="molecule type" value="Genomic_DNA"/>
</dbReference>
<dbReference type="EMBL" id="BT002738">
    <property type="protein sequence ID" value="AAO22567.1"/>
    <property type="molecule type" value="mRNA"/>
</dbReference>
<dbReference type="EMBL" id="AY084945">
    <property type="protein sequence ID" value="AAM61506.1"/>
    <property type="status" value="ALT_INIT"/>
    <property type="molecule type" value="mRNA"/>
</dbReference>
<dbReference type="PIR" id="F86484">
    <property type="entry name" value="F86484"/>
</dbReference>
<dbReference type="RefSeq" id="NP_564473.1">
    <property type="nucleotide sequence ID" value="NM_103323.3"/>
</dbReference>
<dbReference type="PDB" id="7QX8">
    <property type="method" value="X-ray"/>
    <property type="resolution" value="2.74 A"/>
    <property type="chains" value="A/B/C/D/E/F/G/H/I/J/K/L=123-598"/>
</dbReference>
<dbReference type="PDBsum" id="7QX8"/>
<dbReference type="SMR" id="Q84WV0"/>
<dbReference type="FunCoup" id="Q84WV0">
    <property type="interactions" value="727"/>
</dbReference>
<dbReference type="STRING" id="3702.Q84WV0"/>
<dbReference type="GlyGen" id="Q84WV0">
    <property type="glycosylation" value="1 site"/>
</dbReference>
<dbReference type="iPTMnet" id="Q84WV0"/>
<dbReference type="PaxDb" id="3702-AT1G36370.1"/>
<dbReference type="ProteomicsDB" id="248529"/>
<dbReference type="EnsemblPlants" id="AT1G36370.1">
    <property type="protein sequence ID" value="AT1G36370.1"/>
    <property type="gene ID" value="AT1G36370"/>
</dbReference>
<dbReference type="GeneID" id="840543"/>
<dbReference type="Gramene" id="AT1G36370.1">
    <property type="protein sequence ID" value="AT1G36370.1"/>
    <property type="gene ID" value="AT1G36370"/>
</dbReference>
<dbReference type="KEGG" id="ath:AT1G36370"/>
<dbReference type="Araport" id="AT1G36370"/>
<dbReference type="TAIR" id="AT1G36370">
    <property type="gene designation" value="MSA1"/>
</dbReference>
<dbReference type="eggNOG" id="KOG2467">
    <property type="taxonomic scope" value="Eukaryota"/>
</dbReference>
<dbReference type="HOGENOM" id="CLU_022477_0_1_1"/>
<dbReference type="InParanoid" id="Q84WV0"/>
<dbReference type="OMA" id="WGDQPLH"/>
<dbReference type="PhylomeDB" id="Q84WV0"/>
<dbReference type="BioCyc" id="ARA:AT1G36370-MONOMER"/>
<dbReference type="UniPathway" id="UPA00193"/>
<dbReference type="PRO" id="PR:Q84WV0"/>
<dbReference type="Proteomes" id="UP000006548">
    <property type="component" value="Chromosome 1"/>
</dbReference>
<dbReference type="ExpressionAtlas" id="Q84WV0">
    <property type="expression patterns" value="baseline and differential"/>
</dbReference>
<dbReference type="GO" id="GO:0005737">
    <property type="term" value="C:cytoplasm"/>
    <property type="evidence" value="ECO:0007669"/>
    <property type="project" value="UniProtKB-SubCell"/>
</dbReference>
<dbReference type="GO" id="GO:0005634">
    <property type="term" value="C:nucleus"/>
    <property type="evidence" value="ECO:0000314"/>
    <property type="project" value="TAIR"/>
</dbReference>
<dbReference type="GO" id="GO:0004372">
    <property type="term" value="F:glycine hydroxymethyltransferase activity"/>
    <property type="evidence" value="ECO:0007669"/>
    <property type="project" value="UniProtKB-EC"/>
</dbReference>
<dbReference type="GO" id="GO:0030170">
    <property type="term" value="F:pyridoxal phosphate binding"/>
    <property type="evidence" value="ECO:0007669"/>
    <property type="project" value="InterPro"/>
</dbReference>
<dbReference type="GO" id="GO:0019264">
    <property type="term" value="P:glycine biosynthetic process from serine"/>
    <property type="evidence" value="ECO:0007669"/>
    <property type="project" value="InterPro"/>
</dbReference>
<dbReference type="GO" id="GO:0046686">
    <property type="term" value="P:response to cadmium ion"/>
    <property type="evidence" value="ECO:0000270"/>
    <property type="project" value="TAIR"/>
</dbReference>
<dbReference type="GO" id="GO:0046500">
    <property type="term" value="P:S-adenosylmethionine metabolic process"/>
    <property type="evidence" value="ECO:0000315"/>
    <property type="project" value="TAIR"/>
</dbReference>
<dbReference type="GO" id="GO:0055063">
    <property type="term" value="P:sulfate ion homeostasis"/>
    <property type="evidence" value="ECO:0000315"/>
    <property type="project" value="TAIR"/>
</dbReference>
<dbReference type="GO" id="GO:0035999">
    <property type="term" value="P:tetrahydrofolate interconversion"/>
    <property type="evidence" value="ECO:0007669"/>
    <property type="project" value="UniProtKB-UniPathway"/>
</dbReference>
<dbReference type="CDD" id="cd00378">
    <property type="entry name" value="SHMT"/>
    <property type="match status" value="1"/>
</dbReference>
<dbReference type="FunFam" id="3.40.640.10:FF:000097">
    <property type="entry name" value="Serine hydroxymethyltransferase"/>
    <property type="match status" value="1"/>
</dbReference>
<dbReference type="Gene3D" id="3.90.1150.10">
    <property type="entry name" value="Aspartate Aminotransferase, domain 1"/>
    <property type="match status" value="1"/>
</dbReference>
<dbReference type="Gene3D" id="3.40.640.10">
    <property type="entry name" value="Type I PLP-dependent aspartate aminotransferase-like (Major domain)"/>
    <property type="match status" value="1"/>
</dbReference>
<dbReference type="HAMAP" id="MF_00051">
    <property type="entry name" value="SHMT"/>
    <property type="match status" value="1"/>
</dbReference>
<dbReference type="InterPro" id="IPR015424">
    <property type="entry name" value="PyrdxlP-dep_Trfase"/>
</dbReference>
<dbReference type="InterPro" id="IPR015421">
    <property type="entry name" value="PyrdxlP-dep_Trfase_major"/>
</dbReference>
<dbReference type="InterPro" id="IPR015422">
    <property type="entry name" value="PyrdxlP-dep_Trfase_small"/>
</dbReference>
<dbReference type="InterPro" id="IPR001085">
    <property type="entry name" value="Ser_HO-MeTrfase"/>
</dbReference>
<dbReference type="InterPro" id="IPR049943">
    <property type="entry name" value="Ser_HO-MeTrfase-like"/>
</dbReference>
<dbReference type="InterPro" id="IPR019798">
    <property type="entry name" value="Ser_HO-MeTrfase_PLP_BS"/>
</dbReference>
<dbReference type="InterPro" id="IPR039429">
    <property type="entry name" value="SHMT-like_dom"/>
</dbReference>
<dbReference type="NCBIfam" id="NF000586">
    <property type="entry name" value="PRK00011.1"/>
    <property type="match status" value="1"/>
</dbReference>
<dbReference type="PANTHER" id="PTHR11680">
    <property type="entry name" value="SERINE HYDROXYMETHYLTRANSFERASE"/>
    <property type="match status" value="1"/>
</dbReference>
<dbReference type="PANTHER" id="PTHR11680:SF7">
    <property type="entry name" value="SERINE HYDROXYMETHYLTRANSFERASE 7"/>
    <property type="match status" value="1"/>
</dbReference>
<dbReference type="Pfam" id="PF00464">
    <property type="entry name" value="SHMT"/>
    <property type="match status" value="1"/>
</dbReference>
<dbReference type="SUPFAM" id="SSF53383">
    <property type="entry name" value="PLP-dependent transferases"/>
    <property type="match status" value="1"/>
</dbReference>
<dbReference type="PROSITE" id="PS00096">
    <property type="entry name" value="SHMT"/>
    <property type="match status" value="1"/>
</dbReference>
<evidence type="ECO:0000250" key="1"/>
<evidence type="ECO:0000256" key="2">
    <source>
        <dbReference type="SAM" id="MobiDB-lite"/>
    </source>
</evidence>
<evidence type="ECO:0000305" key="3"/>
<evidence type="ECO:0007829" key="4">
    <source>
        <dbReference type="PDB" id="7QX8"/>
    </source>
</evidence>
<name>GLYC7_ARATH</name>
<protein>
    <recommendedName>
        <fullName>Serine hydroxymethyltransferase 7</fullName>
        <shortName>AtSHMT7</shortName>
        <ecNumber>2.1.2.1</ecNumber>
    </recommendedName>
    <alternativeName>
        <fullName>Glycine hydroxymethyltransferase 7</fullName>
    </alternativeName>
    <alternativeName>
        <fullName>Serine methylase 7</fullName>
    </alternativeName>
</protein>
<keyword id="KW-0002">3D-structure</keyword>
<keyword id="KW-0963">Cytoplasm</keyword>
<keyword id="KW-0554">One-carbon metabolism</keyword>
<keyword id="KW-0663">Pyridoxal phosphate</keyword>
<keyword id="KW-1185">Reference proteome</keyword>
<keyword id="KW-0808">Transferase</keyword>
<feature type="chain" id="PRO_0000422352" description="Serine hydroxymethyltransferase 7">
    <location>
        <begin position="1"/>
        <end position="598"/>
    </location>
</feature>
<feature type="region of interest" description="Disordered" evidence="2">
    <location>
        <begin position="57"/>
        <end position="85"/>
    </location>
</feature>
<feature type="compositionally biased region" description="Basic and acidic residues" evidence="2">
    <location>
        <begin position="61"/>
        <end position="85"/>
    </location>
</feature>
<feature type="modified residue" description="N6-(pyridoxal phosphate)lysine" evidence="1">
    <location>
        <position position="370"/>
    </location>
</feature>
<feature type="sequence conflict" description="In Ref. 4; AAM61506." evidence="3" ref="4">
    <original>L</original>
    <variation>V</variation>
    <location>
        <position position="299"/>
    </location>
</feature>
<feature type="helix" evidence="4">
    <location>
        <begin position="123"/>
        <end position="134"/>
    </location>
</feature>
<feature type="helix" evidence="4">
    <location>
        <begin position="138"/>
        <end position="141"/>
    </location>
</feature>
<feature type="helix" evidence="4">
    <location>
        <begin position="143"/>
        <end position="157"/>
    </location>
</feature>
<feature type="strand" evidence="4">
    <location>
        <begin position="159"/>
        <end position="161"/>
    </location>
</feature>
<feature type="helix" evidence="4">
    <location>
        <begin position="171"/>
        <end position="177"/>
    </location>
</feature>
<feature type="helix" evidence="4">
    <location>
        <begin position="180"/>
        <end position="183"/>
    </location>
</feature>
<feature type="strand" evidence="4">
    <location>
        <begin position="192"/>
        <end position="196"/>
    </location>
</feature>
<feature type="helix" evidence="4">
    <location>
        <begin position="199"/>
        <end position="215"/>
    </location>
</feature>
<feature type="turn" evidence="4">
    <location>
        <begin position="220"/>
        <end position="222"/>
    </location>
</feature>
<feature type="strand" evidence="4">
    <location>
        <begin position="223"/>
        <end position="226"/>
    </location>
</feature>
<feature type="helix" evidence="4">
    <location>
        <begin position="232"/>
        <end position="243"/>
    </location>
</feature>
<feature type="strand" evidence="4">
    <location>
        <begin position="249"/>
        <end position="251"/>
    </location>
</feature>
<feature type="helix" evidence="4">
    <location>
        <begin position="275"/>
        <end position="279"/>
    </location>
</feature>
<feature type="strand" evidence="4">
    <location>
        <begin position="280"/>
        <end position="282"/>
    </location>
</feature>
<feature type="turn" evidence="4">
    <location>
        <begin position="289"/>
        <end position="291"/>
    </location>
</feature>
<feature type="strand" evidence="4">
    <location>
        <begin position="292"/>
        <end position="294"/>
    </location>
</feature>
<feature type="helix" evidence="4">
    <location>
        <begin position="296"/>
        <end position="306"/>
    </location>
</feature>
<feature type="strand" evidence="4">
    <location>
        <begin position="309"/>
        <end position="314"/>
    </location>
</feature>
<feature type="helix" evidence="4">
    <location>
        <begin position="324"/>
        <end position="333"/>
    </location>
</feature>
<feature type="strand" evidence="4">
    <location>
        <begin position="337"/>
        <end position="341"/>
    </location>
</feature>
<feature type="turn" evidence="4">
    <location>
        <begin position="343"/>
        <end position="345"/>
    </location>
</feature>
<feature type="helix" evidence="4">
    <location>
        <begin position="346"/>
        <end position="350"/>
    </location>
</feature>
<feature type="helix" evidence="4">
    <location>
        <begin position="357"/>
        <end position="359"/>
    </location>
</feature>
<feature type="strand" evidence="4">
    <location>
        <begin position="362"/>
        <end position="372"/>
    </location>
</feature>
<feature type="strand" evidence="4">
    <location>
        <begin position="378"/>
        <end position="383"/>
    </location>
</feature>
<feature type="helix" evidence="4">
    <location>
        <begin position="407"/>
        <end position="414"/>
    </location>
</feature>
<feature type="turn" evidence="4">
    <location>
        <begin position="415"/>
        <end position="418"/>
    </location>
</feature>
<feature type="helix" evidence="4">
    <location>
        <begin position="424"/>
        <end position="437"/>
    </location>
</feature>
<feature type="helix" evidence="4">
    <location>
        <begin position="440"/>
        <end position="462"/>
    </location>
</feature>
<feature type="helix" evidence="4">
    <location>
        <begin position="468"/>
        <end position="470"/>
    </location>
</feature>
<feature type="strand" evidence="4">
    <location>
        <begin position="473"/>
        <end position="480"/>
    </location>
</feature>
<feature type="helix" evidence="4">
    <location>
        <begin position="482"/>
        <end position="484"/>
    </location>
</feature>
<feature type="helix" evidence="4">
    <location>
        <begin position="488"/>
        <end position="497"/>
    </location>
</feature>
<feature type="strand" evidence="4">
    <location>
        <begin position="503"/>
        <end position="508"/>
    </location>
</feature>
<feature type="strand" evidence="4">
    <location>
        <begin position="514"/>
        <end position="523"/>
    </location>
</feature>
<feature type="helix" evidence="4">
    <location>
        <begin position="524"/>
        <end position="528"/>
    </location>
</feature>
<feature type="helix" evidence="4">
    <location>
        <begin position="533"/>
        <end position="557"/>
    </location>
</feature>
<feature type="helix" evidence="4">
    <location>
        <begin position="561"/>
        <end position="569"/>
    </location>
</feature>
<feature type="helix" evidence="4">
    <location>
        <begin position="572"/>
        <end position="585"/>
    </location>
</feature>
<sequence>MDLSRSQTNFQLGFGCSHASMTPTPTPRAPIADDSINLQVDQSFRSLPTTFSPIPLQLLEQKAEKTTTVDEPKKDGGGGGDQKEDEHFRILGHHMCLKRQRDCPLLLTQSKHPKRSSIGDSDLESRRAAVRAWGDQPIHLADPDIHELMEKEKQRQVRGIELIASENFVCRAVMEALGSHLTNKYSEGMPGARYYTGNQYIDQIENLCIERALTAFGLESDKWGVNVQPYSCTSANFAVYTGLLLPGERIMGLDSPSGGHMSHGYCTPGGKKISAASIFFESFPYKVNPQTGYIDYDKLEDKALDYRPKILICGGSSYPRDWDFARVRQIADKCGAVLMCDMAHISGLVATKECSNPFDHCDIVTSTTHKGLRGPRGGIIFYRRGPKIRKQGHHSSHCDTSTHYDLEEKINFAVFPSLQGGPHNNHIAALAIALKQVATPEYKAYIQQMKKNAQALAAALLRRKCRLVTGGTDNHLLLWDLTPMGLTGKVYEKVCEMCHITLNKTAIFGDNGTISPGGVRIGTPAMTTRGCIESDFETMADFLIKAAQITSALQREHGKSHKEFVKSLCTNKDIAELRNRVEAFALQYEMPASLIRIE</sequence>
<gene>
    <name type="primary">SHM7</name>
    <name type="synonym">SHMT7</name>
    <name type="ordered locus">At1g36370</name>
    <name type="ORF">F7F23.9</name>
</gene>